<sequence>MHGSCSFLMLLLPLLLLLVATTGPVGALTDEEKRLMVELHNLYRAQVSPTASDMLHMRWDEELAAFAKAYARQCVWGHNKERGRRGENLFAITDEGMDVPLAMEEWHHEREHYNLSAATCSPGQMCGHYTQVVWAKTERIGCGSHFCEKLQGVEETNIELLVCNYEPPGNVKGKRPYQEGTPCSQCPSGYHCKNSLCEPIGSPEDAQDLPYLVTEAPSFRATEASDSRKMGTPSSLATGIPAFLVTEVSGSLATKALPAVETQAPTSLATKDPPSMATEAPPCVTTEVPSILAAHSLPSLDEEPVTFPKSTHVPIPKSADKVTDKTKVPSRSPENSLDPKMSLTGARELLPHAQEEAEAEAELPPSSEVLASVFPAQDKPGELQATLDHTGHTSSKSLPNFPNTSATANATGGRALALQSSLPGAEGPDKPSVVSGLNSGPGHVWGPLLGLLLLPPLVLAGIF</sequence>
<proteinExistence type="evidence at protein level"/>
<accession>Q6UXB8</accession>
<accession>Q6ZVG9</accession>
<accession>Q8IYL8</accession>
<accession>Q8NBK0</accession>
<accession>Q8TCB8</accession>
<protein>
    <recommendedName>
        <fullName>Peptidase inhibitor 16</fullName>
        <shortName>PI-16</shortName>
    </recommendedName>
    <alternativeName>
        <fullName>Cysteine-rich secretory protein 9</fullName>
        <shortName>CRISP-9</shortName>
    </alternativeName>
    <alternativeName>
        <fullName>PSP94-binding protein</fullName>
    </alternativeName>
    <cdAntigenName>CD364</cdAntigenName>
</protein>
<gene>
    <name type="primary">PI16</name>
    <name type="synonym">CRISP9</name>
    <name type="synonym">PSPBP</name>
    <name type="ORF">PSEC0164</name>
    <name type="ORF">UNQ289/PRO328</name>
</gene>
<keyword id="KW-0025">Alternative splicing</keyword>
<keyword id="KW-0903">Direct protein sequencing</keyword>
<keyword id="KW-0325">Glycoprotein</keyword>
<keyword id="KW-0646">Protease inhibitor</keyword>
<keyword id="KW-1267">Proteomics identification</keyword>
<keyword id="KW-1185">Reference proteome</keyword>
<keyword id="KW-0964">Secreted</keyword>
<keyword id="KW-0732">Signal</keyword>
<name>PI16_HUMAN</name>
<organism>
    <name type="scientific">Homo sapiens</name>
    <name type="common">Human</name>
    <dbReference type="NCBI Taxonomy" id="9606"/>
    <lineage>
        <taxon>Eukaryota</taxon>
        <taxon>Metazoa</taxon>
        <taxon>Chordata</taxon>
        <taxon>Craniata</taxon>
        <taxon>Vertebrata</taxon>
        <taxon>Euteleostomi</taxon>
        <taxon>Mammalia</taxon>
        <taxon>Eutheria</taxon>
        <taxon>Euarchontoglires</taxon>
        <taxon>Primates</taxon>
        <taxon>Haplorrhini</taxon>
        <taxon>Catarrhini</taxon>
        <taxon>Hominidae</taxon>
        <taxon>Homo</taxon>
    </lineage>
</organism>
<dbReference type="EMBL" id="AY358422">
    <property type="protein sequence ID" value="AAQ88788.1"/>
    <property type="molecule type" value="mRNA"/>
</dbReference>
<dbReference type="EMBL" id="AK075470">
    <property type="protein sequence ID" value="BAC11640.1"/>
    <property type="molecule type" value="mRNA"/>
</dbReference>
<dbReference type="EMBL" id="AK124589">
    <property type="protein sequence ID" value="BAC85892.1"/>
    <property type="molecule type" value="mRNA"/>
</dbReference>
<dbReference type="EMBL" id="AL122034">
    <property type="status" value="NOT_ANNOTATED_CDS"/>
    <property type="molecule type" value="Genomic_DNA"/>
</dbReference>
<dbReference type="EMBL" id="BC022399">
    <property type="protein sequence ID" value="AAH22399.2"/>
    <property type="status" value="ALT_FRAME"/>
    <property type="molecule type" value="mRNA"/>
</dbReference>
<dbReference type="EMBL" id="BC035634">
    <property type="protein sequence ID" value="AAH35634.2"/>
    <property type="molecule type" value="mRNA"/>
</dbReference>
<dbReference type="CCDS" id="CCDS34440.1">
    <molecule id="Q6UXB8-1"/>
</dbReference>
<dbReference type="RefSeq" id="NP_001186088.1">
    <molecule id="Q6UXB8-1"/>
    <property type="nucleotide sequence ID" value="NM_001199159.2"/>
</dbReference>
<dbReference type="RefSeq" id="NP_699201.2">
    <molecule id="Q6UXB8-1"/>
    <property type="nucleotide sequence ID" value="NM_153370.3"/>
</dbReference>
<dbReference type="RefSeq" id="XP_005248974.1">
    <molecule id="Q6UXB8-2"/>
    <property type="nucleotide sequence ID" value="XM_005248917.4"/>
</dbReference>
<dbReference type="RefSeq" id="XP_011512677.1">
    <molecule id="Q6UXB8-1"/>
    <property type="nucleotide sequence ID" value="XM_011514375.4"/>
</dbReference>
<dbReference type="RefSeq" id="XP_016865919.1">
    <molecule id="Q6UXB8-2"/>
    <property type="nucleotide sequence ID" value="XM_017010430.3"/>
</dbReference>
<dbReference type="RefSeq" id="XP_054210559.1">
    <molecule id="Q6UXB8-1"/>
    <property type="nucleotide sequence ID" value="XM_054354584.1"/>
</dbReference>
<dbReference type="RefSeq" id="XP_054210560.1">
    <molecule id="Q6UXB8-2"/>
    <property type="nucleotide sequence ID" value="XM_054354585.1"/>
</dbReference>
<dbReference type="RefSeq" id="XP_054210561.1">
    <molecule id="Q6UXB8-2"/>
    <property type="nucleotide sequence ID" value="XM_054354586.1"/>
</dbReference>
<dbReference type="SMR" id="Q6UXB8"/>
<dbReference type="BioGRID" id="128731">
    <property type="interactions" value="6"/>
</dbReference>
<dbReference type="FunCoup" id="Q6UXB8">
    <property type="interactions" value="188"/>
</dbReference>
<dbReference type="IntAct" id="Q6UXB8">
    <property type="interactions" value="7"/>
</dbReference>
<dbReference type="MINT" id="Q6UXB8"/>
<dbReference type="STRING" id="9606.ENSP00000497550"/>
<dbReference type="GlyCosmos" id="Q6UXB8">
    <property type="glycosylation" value="15 sites, 4 glycans"/>
</dbReference>
<dbReference type="GlyGen" id="Q6UXB8">
    <property type="glycosylation" value="20 sites, 6 O-linked glycans (16 sites)"/>
</dbReference>
<dbReference type="iPTMnet" id="Q6UXB8"/>
<dbReference type="PhosphoSitePlus" id="Q6UXB8"/>
<dbReference type="BioMuta" id="PI16"/>
<dbReference type="DMDM" id="74749419"/>
<dbReference type="MassIVE" id="Q6UXB8"/>
<dbReference type="PaxDb" id="9606-ENSP00000362778"/>
<dbReference type="PeptideAtlas" id="Q6UXB8"/>
<dbReference type="ProteomicsDB" id="67586">
    <molecule id="Q6UXB8-1"/>
</dbReference>
<dbReference type="ProteomicsDB" id="67587">
    <molecule id="Q6UXB8-2"/>
</dbReference>
<dbReference type="ABCD" id="Q6UXB8">
    <property type="antibodies" value="1 sequenced antibody"/>
</dbReference>
<dbReference type="Antibodypedia" id="29743">
    <property type="antibodies" value="193 antibodies from 26 providers"/>
</dbReference>
<dbReference type="DNASU" id="221476"/>
<dbReference type="Ensembl" id="ENST00000373674.4">
    <molecule id="Q6UXB8-1"/>
    <property type="protein sequence ID" value="ENSP00000362778.3"/>
    <property type="gene ID" value="ENSG00000164530.15"/>
</dbReference>
<dbReference type="Ensembl" id="ENST00000611814.4">
    <molecule id="Q6UXB8-1"/>
    <property type="protein sequence ID" value="ENSP00000478888.1"/>
    <property type="gene ID" value="ENSG00000164530.15"/>
</dbReference>
<dbReference type="Ensembl" id="ENST00000647861.1">
    <molecule id="Q6UXB8-1"/>
    <property type="protein sequence ID" value="ENSP00000497550.1"/>
    <property type="gene ID" value="ENSG00000164530.15"/>
</dbReference>
<dbReference type="GeneID" id="221476"/>
<dbReference type="KEGG" id="hsa:221476"/>
<dbReference type="MANE-Select" id="ENST00000373674.4">
    <property type="protein sequence ID" value="ENSP00000362778.3"/>
    <property type="RefSeq nucleotide sequence ID" value="NM_153370.3"/>
    <property type="RefSeq protein sequence ID" value="NP_699201.2"/>
</dbReference>
<dbReference type="UCSC" id="uc003ona.3">
    <molecule id="Q6UXB8-1"/>
    <property type="organism name" value="human"/>
</dbReference>
<dbReference type="AGR" id="HGNC:21245"/>
<dbReference type="CTD" id="221476"/>
<dbReference type="DisGeNET" id="221476"/>
<dbReference type="GeneCards" id="PI16"/>
<dbReference type="HGNC" id="HGNC:21245">
    <property type="gene designation" value="PI16"/>
</dbReference>
<dbReference type="HPA" id="ENSG00000164530">
    <property type="expression patterns" value="Tissue enhanced (cervix, heart muscle, vagina)"/>
</dbReference>
<dbReference type="neXtProt" id="NX_Q6UXB8"/>
<dbReference type="OpenTargets" id="ENSG00000164530"/>
<dbReference type="PharmGKB" id="PA134867616"/>
<dbReference type="VEuPathDB" id="HostDB:ENSG00000164530"/>
<dbReference type="eggNOG" id="KOG3017">
    <property type="taxonomic scope" value="Eukaryota"/>
</dbReference>
<dbReference type="GeneTree" id="ENSGT00940000162458"/>
<dbReference type="HOGENOM" id="CLU_049124_0_0_1"/>
<dbReference type="InParanoid" id="Q6UXB8"/>
<dbReference type="OMA" id="QLAVEQW"/>
<dbReference type="OrthoDB" id="337038at2759"/>
<dbReference type="PAN-GO" id="Q6UXB8">
    <property type="GO annotations" value="1 GO annotation based on evolutionary models"/>
</dbReference>
<dbReference type="PhylomeDB" id="Q6UXB8"/>
<dbReference type="TreeFam" id="TF316148"/>
<dbReference type="PathwayCommons" id="Q6UXB8"/>
<dbReference type="SignaLink" id="Q6UXB8"/>
<dbReference type="BioGRID-ORCS" id="221476">
    <property type="hits" value="15 hits in 1155 CRISPR screens"/>
</dbReference>
<dbReference type="GenomeRNAi" id="221476"/>
<dbReference type="Pharos" id="Q6UXB8">
    <property type="development level" value="Tbio"/>
</dbReference>
<dbReference type="PRO" id="PR:Q6UXB8"/>
<dbReference type="Proteomes" id="UP000005640">
    <property type="component" value="Chromosome 6"/>
</dbReference>
<dbReference type="RNAct" id="Q6UXB8">
    <property type="molecule type" value="protein"/>
</dbReference>
<dbReference type="Bgee" id="ENSG00000164530">
    <property type="expression patterns" value="Expressed in upper arm skin and 164 other cell types or tissues"/>
</dbReference>
<dbReference type="GO" id="GO:0005615">
    <property type="term" value="C:extracellular space"/>
    <property type="evidence" value="ECO:0000318"/>
    <property type="project" value="GO_Central"/>
</dbReference>
<dbReference type="GO" id="GO:0030414">
    <property type="term" value="F:peptidase inhibitor activity"/>
    <property type="evidence" value="ECO:0007669"/>
    <property type="project" value="UniProtKB-KW"/>
</dbReference>
<dbReference type="GO" id="GO:0061052">
    <property type="term" value="P:negative regulation of cell growth involved in cardiac muscle cell development"/>
    <property type="evidence" value="ECO:0007669"/>
    <property type="project" value="Ensembl"/>
</dbReference>
<dbReference type="CDD" id="cd05559">
    <property type="entry name" value="CAP_PI16_HrTT-1"/>
    <property type="match status" value="1"/>
</dbReference>
<dbReference type="FunFam" id="3.40.33.10:FF:000011">
    <property type="entry name" value="Peptidase inhibitor 16"/>
    <property type="match status" value="1"/>
</dbReference>
<dbReference type="Gene3D" id="3.40.33.10">
    <property type="entry name" value="CAP"/>
    <property type="match status" value="1"/>
</dbReference>
<dbReference type="InterPro" id="IPR018244">
    <property type="entry name" value="Allrgn_V5/Tpx1_CS"/>
</dbReference>
<dbReference type="InterPro" id="IPR014044">
    <property type="entry name" value="CAP_dom"/>
</dbReference>
<dbReference type="InterPro" id="IPR035940">
    <property type="entry name" value="CAP_sf"/>
</dbReference>
<dbReference type="InterPro" id="IPR001283">
    <property type="entry name" value="CRISP-related"/>
</dbReference>
<dbReference type="PANTHER" id="PTHR10334">
    <property type="entry name" value="CYSTEINE-RICH SECRETORY PROTEIN-RELATED"/>
    <property type="match status" value="1"/>
</dbReference>
<dbReference type="Pfam" id="PF00188">
    <property type="entry name" value="CAP"/>
    <property type="match status" value="1"/>
</dbReference>
<dbReference type="PRINTS" id="PR00837">
    <property type="entry name" value="V5TPXLIKE"/>
</dbReference>
<dbReference type="SMART" id="SM00198">
    <property type="entry name" value="SCP"/>
    <property type="match status" value="1"/>
</dbReference>
<dbReference type="SUPFAM" id="SSF55797">
    <property type="entry name" value="PR-1-like"/>
    <property type="match status" value="1"/>
</dbReference>
<dbReference type="PROSITE" id="PS01009">
    <property type="entry name" value="CRISP_1"/>
    <property type="match status" value="1"/>
</dbReference>
<dbReference type="PROSITE" id="PS01010">
    <property type="entry name" value="CRISP_2"/>
    <property type="match status" value="1"/>
</dbReference>
<evidence type="ECO:0000250" key="1">
    <source>
        <dbReference type="UniProtKB" id="Q9ET66"/>
    </source>
</evidence>
<evidence type="ECO:0000255" key="2"/>
<evidence type="ECO:0000256" key="3">
    <source>
        <dbReference type="SAM" id="MobiDB-lite"/>
    </source>
</evidence>
<evidence type="ECO:0000269" key="4">
    <source>
    </source>
</evidence>
<evidence type="ECO:0000269" key="5">
    <source>
    </source>
</evidence>
<evidence type="ECO:0000269" key="6">
    <source>
    </source>
</evidence>
<evidence type="ECO:0000269" key="7">
    <source>
    </source>
</evidence>
<evidence type="ECO:0000269" key="8">
    <source>
    </source>
</evidence>
<evidence type="ECO:0000269" key="9">
    <source>
    </source>
</evidence>
<evidence type="ECO:0000303" key="10">
    <source>
    </source>
</evidence>
<evidence type="ECO:0000305" key="11"/>
<comment type="function">
    <text evidence="1">May inhibit cardiomyocyte growth.</text>
</comment>
<comment type="subunit">
    <text evidence="5">Interacts with PSP94/MSMB.</text>
</comment>
<comment type="interaction">
    <interactant intactId="EBI-12810028">
        <id>Q6UXB8</id>
    </interactant>
    <interactant intactId="EBI-721179">
        <id>P27449</id>
        <label>ATP6V0C</label>
    </interactant>
    <organismsDiffer>false</organismsDiffer>
    <experiments>3</experiments>
</comment>
<comment type="interaction">
    <interactant intactId="EBI-12810028">
        <id>Q6UXB8</id>
    </interactant>
    <interactant intactId="EBI-12188331">
        <id>P60201-2</id>
        <label>PLP1</label>
    </interactant>
    <organismsDiffer>false</organismsDiffer>
    <experiments>3</experiments>
</comment>
<comment type="interaction">
    <interactant intactId="EBI-12810028">
        <id>Q6UXB8</id>
    </interactant>
    <interactant intactId="EBI-12200293">
        <id>P0DN84</id>
        <label>STRIT1</label>
    </interactant>
    <organismsDiffer>false</organismsDiffer>
    <experiments>3</experiments>
</comment>
<comment type="interaction">
    <interactant intactId="EBI-12810028">
        <id>Q6UXB8</id>
    </interactant>
    <interactant intactId="EBI-1045825">
        <id>P55061</id>
        <label>TMBIM6</label>
    </interactant>
    <organismsDiffer>false</organismsDiffer>
    <experiments>3</experiments>
</comment>
<comment type="interaction">
    <interactant intactId="EBI-12810028">
        <id>Q6UXB8</id>
    </interactant>
    <interactant intactId="EBI-2852148">
        <id>Q9H2L4</id>
        <label>TMEM60</label>
    </interactant>
    <organismsDiffer>false</organismsDiffer>
    <experiments>3</experiments>
</comment>
<comment type="interaction">
    <interactant intactId="EBI-12810028">
        <id>Q6UXB8</id>
    </interactant>
    <interactant intactId="EBI-12015604">
        <id>Q8N2M4</id>
        <label>TMEM86A</label>
    </interactant>
    <organismsDiffer>false</organismsDiffer>
    <experiments>3</experiments>
</comment>
<comment type="subcellular location">
    <subcellularLocation>
        <location evidence="5 8 9">Secreted</location>
    </subcellularLocation>
</comment>
<comment type="alternative products">
    <event type="alternative splicing"/>
    <isoform>
        <id>Q6UXB8-1</id>
        <name>1</name>
        <sequence type="displayed"/>
    </isoform>
    <isoform>
        <id>Q6UXB8-2</id>
        <name>2</name>
        <sequence type="described" ref="VSP_025574"/>
    </isoform>
</comment>
<comment type="tissue specificity">
    <text evidence="5 8">Expressed in prostate, testis, ovary and intestine. Concentrates in prostate cancer patient's sera.</text>
</comment>
<comment type="PTM">
    <text evidence="5 9">N- and O-glycosylated. O-glycosylated with core 1 or possibly core 8 glycans.</text>
</comment>
<comment type="miscellaneous">
    <text>May serve as a marker following prostatectomy for prostate cancer.</text>
</comment>
<comment type="similarity">
    <text evidence="11">Belongs to the CRISP family.</text>
</comment>
<comment type="sequence caution" evidence="11">
    <conflict type="frameshift">
        <sequence resource="EMBL-CDS" id="AAH22399"/>
    </conflict>
</comment>
<feature type="signal peptide" evidence="5">
    <location>
        <begin position="1"/>
        <end position="27"/>
    </location>
</feature>
<feature type="chain" id="PRO_0000287633" description="Peptidase inhibitor 16">
    <location>
        <begin position="28"/>
        <end position="463"/>
    </location>
</feature>
<feature type="domain" description="SCP">
    <location>
        <begin position="37"/>
        <end position="165"/>
    </location>
</feature>
<feature type="region of interest" description="Disordered" evidence="3">
    <location>
        <begin position="262"/>
        <end position="281"/>
    </location>
</feature>
<feature type="region of interest" description="Disordered" evidence="3">
    <location>
        <begin position="303"/>
        <end position="341"/>
    </location>
</feature>
<feature type="region of interest" description="Disordered" evidence="3">
    <location>
        <begin position="383"/>
        <end position="408"/>
    </location>
</feature>
<feature type="region of interest" description="O-glycosylated at one site">
    <location>
        <begin position="386"/>
        <end position="395"/>
    </location>
</feature>
<feature type="compositionally biased region" description="Basic and acidic residues" evidence="3">
    <location>
        <begin position="318"/>
        <end position="327"/>
    </location>
</feature>
<feature type="compositionally biased region" description="Polar residues" evidence="3">
    <location>
        <begin position="392"/>
        <end position="408"/>
    </location>
</feature>
<feature type="glycosylation site" description="N-linked (GlcNAc...) asparagine" evidence="2">
    <location>
        <position position="114"/>
    </location>
</feature>
<feature type="glycosylation site" description="N-linked (GlcNAc...) asparagine" evidence="2">
    <location>
        <position position="403"/>
    </location>
</feature>
<feature type="glycosylation site" description="N-linked (GlcNAc...) asparagine" evidence="2">
    <location>
        <position position="409"/>
    </location>
</feature>
<feature type="splice variant" id="VSP_025574" description="In isoform 2." evidence="10">
    <location>
        <begin position="231"/>
        <end position="423"/>
    </location>
</feature>
<feature type="sequence variant" id="VAR_032337" description="In dbSNP:rs1405069." evidence="4 6 7">
    <original>T</original>
    <variation>P</variation>
    <location>
        <position position="50"/>
    </location>
</feature>
<feature type="sequence variant" id="VAR_032338" description="In dbSNP:rs16889318.">
    <original>L</original>
    <variation>V</variation>
    <location>
        <position position="416"/>
    </location>
</feature>
<feature type="sequence conflict" description="In Ref. 2; BAC11640." evidence="11" ref="2">
    <original>E</original>
    <variation>G</variation>
    <location>
        <position position="179"/>
    </location>
</feature>
<feature type="sequence conflict" description="In Ref. 2; BAC11640." evidence="11" ref="2">
    <original>V</original>
    <variation>A</variation>
    <location>
        <position position="288"/>
    </location>
</feature>
<reference key="1">
    <citation type="journal article" date="2003" name="Genome Res.">
        <title>The secreted protein discovery initiative (SPDI), a large-scale effort to identify novel human secreted and transmembrane proteins: a bioinformatics assessment.</title>
        <authorList>
            <person name="Clark H.F."/>
            <person name="Gurney A.L."/>
            <person name="Abaya E."/>
            <person name="Baker K."/>
            <person name="Baldwin D.T."/>
            <person name="Brush J."/>
            <person name="Chen J."/>
            <person name="Chow B."/>
            <person name="Chui C."/>
            <person name="Crowley C."/>
            <person name="Currell B."/>
            <person name="Deuel B."/>
            <person name="Dowd P."/>
            <person name="Eaton D."/>
            <person name="Foster J.S."/>
            <person name="Grimaldi C."/>
            <person name="Gu Q."/>
            <person name="Hass P.E."/>
            <person name="Heldens S."/>
            <person name="Huang A."/>
            <person name="Kim H.S."/>
            <person name="Klimowski L."/>
            <person name="Jin Y."/>
            <person name="Johnson S."/>
            <person name="Lee J."/>
            <person name="Lewis L."/>
            <person name="Liao D."/>
            <person name="Mark M.R."/>
            <person name="Robbie E."/>
            <person name="Sanchez C."/>
            <person name="Schoenfeld J."/>
            <person name="Seshagiri S."/>
            <person name="Simmons L."/>
            <person name="Singh J."/>
            <person name="Smith V."/>
            <person name="Stinson J."/>
            <person name="Vagts A."/>
            <person name="Vandlen R.L."/>
            <person name="Watanabe C."/>
            <person name="Wieand D."/>
            <person name="Woods K."/>
            <person name="Xie M.-H."/>
            <person name="Yansura D.G."/>
            <person name="Yi S."/>
            <person name="Yu G."/>
            <person name="Yuan J."/>
            <person name="Zhang M."/>
            <person name="Zhang Z."/>
            <person name="Goddard A.D."/>
            <person name="Wood W.I."/>
            <person name="Godowski P.J."/>
            <person name="Gray A.M."/>
        </authorList>
    </citation>
    <scope>NUCLEOTIDE SEQUENCE [LARGE SCALE MRNA] (ISOFORM 1)</scope>
</reference>
<reference key="2">
    <citation type="journal article" date="2005" name="DNA Res.">
        <title>Signal sequence and keyword trap in silico for selection of full-length human cDNAs encoding secretion or membrane proteins from oligo-capped cDNA libraries.</title>
        <authorList>
            <person name="Otsuki T."/>
            <person name="Ota T."/>
            <person name="Nishikawa T."/>
            <person name="Hayashi K."/>
            <person name="Suzuki Y."/>
            <person name="Yamamoto J."/>
            <person name="Wakamatsu A."/>
            <person name="Kimura K."/>
            <person name="Sakamoto K."/>
            <person name="Hatano N."/>
            <person name="Kawai Y."/>
            <person name="Ishii S."/>
            <person name="Saito K."/>
            <person name="Kojima S."/>
            <person name="Sugiyama T."/>
            <person name="Ono T."/>
            <person name="Okano K."/>
            <person name="Yoshikawa Y."/>
            <person name="Aotsuka S."/>
            <person name="Sasaki N."/>
            <person name="Hattori A."/>
            <person name="Okumura K."/>
            <person name="Nagai K."/>
            <person name="Sugano S."/>
            <person name="Isogai T."/>
        </authorList>
    </citation>
    <scope>NUCLEOTIDE SEQUENCE [LARGE SCALE MRNA] (ISOFORM 1)</scope>
    <scope>VARIANT PRO-50</scope>
</reference>
<reference key="3">
    <citation type="journal article" date="2004" name="Nat. Genet.">
        <title>Complete sequencing and characterization of 21,243 full-length human cDNAs.</title>
        <authorList>
            <person name="Ota T."/>
            <person name="Suzuki Y."/>
            <person name="Nishikawa T."/>
            <person name="Otsuki T."/>
            <person name="Sugiyama T."/>
            <person name="Irie R."/>
            <person name="Wakamatsu A."/>
            <person name="Hayashi K."/>
            <person name="Sato H."/>
            <person name="Nagai K."/>
            <person name="Kimura K."/>
            <person name="Makita H."/>
            <person name="Sekine M."/>
            <person name="Obayashi M."/>
            <person name="Nishi T."/>
            <person name="Shibahara T."/>
            <person name="Tanaka T."/>
            <person name="Ishii S."/>
            <person name="Yamamoto J."/>
            <person name="Saito K."/>
            <person name="Kawai Y."/>
            <person name="Isono Y."/>
            <person name="Nakamura Y."/>
            <person name="Nagahari K."/>
            <person name="Murakami K."/>
            <person name="Yasuda T."/>
            <person name="Iwayanagi T."/>
            <person name="Wagatsuma M."/>
            <person name="Shiratori A."/>
            <person name="Sudo H."/>
            <person name="Hosoiri T."/>
            <person name="Kaku Y."/>
            <person name="Kodaira H."/>
            <person name="Kondo H."/>
            <person name="Sugawara M."/>
            <person name="Takahashi M."/>
            <person name="Kanda K."/>
            <person name="Yokoi T."/>
            <person name="Furuya T."/>
            <person name="Kikkawa E."/>
            <person name="Omura Y."/>
            <person name="Abe K."/>
            <person name="Kamihara K."/>
            <person name="Katsuta N."/>
            <person name="Sato K."/>
            <person name="Tanikawa M."/>
            <person name="Yamazaki M."/>
            <person name="Ninomiya K."/>
            <person name="Ishibashi T."/>
            <person name="Yamashita H."/>
            <person name="Murakawa K."/>
            <person name="Fujimori K."/>
            <person name="Tanai H."/>
            <person name="Kimata M."/>
            <person name="Watanabe M."/>
            <person name="Hiraoka S."/>
            <person name="Chiba Y."/>
            <person name="Ishida S."/>
            <person name="Ono Y."/>
            <person name="Takiguchi S."/>
            <person name="Watanabe S."/>
            <person name="Yosida M."/>
            <person name="Hotuta T."/>
            <person name="Kusano J."/>
            <person name="Kanehori K."/>
            <person name="Takahashi-Fujii A."/>
            <person name="Hara H."/>
            <person name="Tanase T.-O."/>
            <person name="Nomura Y."/>
            <person name="Togiya S."/>
            <person name="Komai F."/>
            <person name="Hara R."/>
            <person name="Takeuchi K."/>
            <person name="Arita M."/>
            <person name="Imose N."/>
            <person name="Musashino K."/>
            <person name="Yuuki H."/>
            <person name="Oshima A."/>
            <person name="Sasaki N."/>
            <person name="Aotsuka S."/>
            <person name="Yoshikawa Y."/>
            <person name="Matsunawa H."/>
            <person name="Ichihara T."/>
            <person name="Shiohata N."/>
            <person name="Sano S."/>
            <person name="Moriya S."/>
            <person name="Momiyama H."/>
            <person name="Satoh N."/>
            <person name="Takami S."/>
            <person name="Terashima Y."/>
            <person name="Suzuki O."/>
            <person name="Nakagawa S."/>
            <person name="Senoh A."/>
            <person name="Mizoguchi H."/>
            <person name="Goto Y."/>
            <person name="Shimizu F."/>
            <person name="Wakebe H."/>
            <person name="Hishigaki H."/>
            <person name="Watanabe T."/>
            <person name="Sugiyama A."/>
            <person name="Takemoto M."/>
            <person name="Kawakami B."/>
            <person name="Yamazaki M."/>
            <person name="Watanabe K."/>
            <person name="Kumagai A."/>
            <person name="Itakura S."/>
            <person name="Fukuzumi Y."/>
            <person name="Fujimori Y."/>
            <person name="Komiyama M."/>
            <person name="Tashiro H."/>
            <person name="Tanigami A."/>
            <person name="Fujiwara T."/>
            <person name="Ono T."/>
            <person name="Yamada K."/>
            <person name="Fujii Y."/>
            <person name="Ozaki K."/>
            <person name="Hirao M."/>
            <person name="Ohmori Y."/>
            <person name="Kawabata A."/>
            <person name="Hikiji T."/>
            <person name="Kobatake N."/>
            <person name="Inagaki H."/>
            <person name="Ikema Y."/>
            <person name="Okamoto S."/>
            <person name="Okitani R."/>
            <person name="Kawakami T."/>
            <person name="Noguchi S."/>
            <person name="Itoh T."/>
            <person name="Shigeta K."/>
            <person name="Senba T."/>
            <person name="Matsumura K."/>
            <person name="Nakajima Y."/>
            <person name="Mizuno T."/>
            <person name="Morinaga M."/>
            <person name="Sasaki M."/>
            <person name="Togashi T."/>
            <person name="Oyama M."/>
            <person name="Hata H."/>
            <person name="Watanabe M."/>
            <person name="Komatsu T."/>
            <person name="Mizushima-Sugano J."/>
            <person name="Satoh T."/>
            <person name="Shirai Y."/>
            <person name="Takahashi Y."/>
            <person name="Nakagawa K."/>
            <person name="Okumura K."/>
            <person name="Nagase T."/>
            <person name="Nomura N."/>
            <person name="Kikuchi H."/>
            <person name="Masuho Y."/>
            <person name="Yamashita R."/>
            <person name="Nakai K."/>
            <person name="Yada T."/>
            <person name="Nakamura Y."/>
            <person name="Ohara O."/>
            <person name="Isogai T."/>
            <person name="Sugano S."/>
        </authorList>
    </citation>
    <scope>NUCLEOTIDE SEQUENCE [LARGE SCALE MRNA] (ISOFORM 2)</scope>
    <scope>VARIANT PRO-50</scope>
    <source>
        <tissue>Cerebellum</tissue>
    </source>
</reference>
<reference key="4">
    <citation type="journal article" date="2003" name="Nature">
        <title>The DNA sequence and analysis of human chromosome 6.</title>
        <authorList>
            <person name="Mungall A.J."/>
            <person name="Palmer S.A."/>
            <person name="Sims S.K."/>
            <person name="Edwards C.A."/>
            <person name="Ashurst J.L."/>
            <person name="Wilming L."/>
            <person name="Jones M.C."/>
            <person name="Horton R."/>
            <person name="Hunt S.E."/>
            <person name="Scott C.E."/>
            <person name="Gilbert J.G.R."/>
            <person name="Clamp M.E."/>
            <person name="Bethel G."/>
            <person name="Milne S."/>
            <person name="Ainscough R."/>
            <person name="Almeida J.P."/>
            <person name="Ambrose K.D."/>
            <person name="Andrews T.D."/>
            <person name="Ashwell R.I.S."/>
            <person name="Babbage A.K."/>
            <person name="Bagguley C.L."/>
            <person name="Bailey J."/>
            <person name="Banerjee R."/>
            <person name="Barker D.J."/>
            <person name="Barlow K.F."/>
            <person name="Bates K."/>
            <person name="Beare D.M."/>
            <person name="Beasley H."/>
            <person name="Beasley O."/>
            <person name="Bird C.P."/>
            <person name="Blakey S.E."/>
            <person name="Bray-Allen S."/>
            <person name="Brook J."/>
            <person name="Brown A.J."/>
            <person name="Brown J.Y."/>
            <person name="Burford D.C."/>
            <person name="Burrill W."/>
            <person name="Burton J."/>
            <person name="Carder C."/>
            <person name="Carter N.P."/>
            <person name="Chapman J.C."/>
            <person name="Clark S.Y."/>
            <person name="Clark G."/>
            <person name="Clee C.M."/>
            <person name="Clegg S."/>
            <person name="Cobley V."/>
            <person name="Collier R.E."/>
            <person name="Collins J.E."/>
            <person name="Colman L.K."/>
            <person name="Corby N.R."/>
            <person name="Coville G.J."/>
            <person name="Culley K.M."/>
            <person name="Dhami P."/>
            <person name="Davies J."/>
            <person name="Dunn M."/>
            <person name="Earthrowl M.E."/>
            <person name="Ellington A.E."/>
            <person name="Evans K.A."/>
            <person name="Faulkner L."/>
            <person name="Francis M.D."/>
            <person name="Frankish A."/>
            <person name="Frankland J."/>
            <person name="French L."/>
            <person name="Garner P."/>
            <person name="Garnett J."/>
            <person name="Ghori M.J."/>
            <person name="Gilby L.M."/>
            <person name="Gillson C.J."/>
            <person name="Glithero R.J."/>
            <person name="Grafham D.V."/>
            <person name="Grant M."/>
            <person name="Gribble S."/>
            <person name="Griffiths C."/>
            <person name="Griffiths M.N.D."/>
            <person name="Hall R."/>
            <person name="Halls K.S."/>
            <person name="Hammond S."/>
            <person name="Harley J.L."/>
            <person name="Hart E.A."/>
            <person name="Heath P.D."/>
            <person name="Heathcott R."/>
            <person name="Holmes S.J."/>
            <person name="Howden P.J."/>
            <person name="Howe K.L."/>
            <person name="Howell G.R."/>
            <person name="Huckle E."/>
            <person name="Humphray S.J."/>
            <person name="Humphries M.D."/>
            <person name="Hunt A.R."/>
            <person name="Johnson C.M."/>
            <person name="Joy A.A."/>
            <person name="Kay M."/>
            <person name="Keenan S.J."/>
            <person name="Kimberley A.M."/>
            <person name="King A."/>
            <person name="Laird G.K."/>
            <person name="Langford C."/>
            <person name="Lawlor S."/>
            <person name="Leongamornlert D.A."/>
            <person name="Leversha M."/>
            <person name="Lloyd C.R."/>
            <person name="Lloyd D.M."/>
            <person name="Loveland J.E."/>
            <person name="Lovell J."/>
            <person name="Martin S."/>
            <person name="Mashreghi-Mohammadi M."/>
            <person name="Maslen G.L."/>
            <person name="Matthews L."/>
            <person name="McCann O.T."/>
            <person name="McLaren S.J."/>
            <person name="McLay K."/>
            <person name="McMurray A."/>
            <person name="Moore M.J.F."/>
            <person name="Mullikin J.C."/>
            <person name="Niblett D."/>
            <person name="Nickerson T."/>
            <person name="Novik K.L."/>
            <person name="Oliver K."/>
            <person name="Overton-Larty E.K."/>
            <person name="Parker A."/>
            <person name="Patel R."/>
            <person name="Pearce A.V."/>
            <person name="Peck A.I."/>
            <person name="Phillimore B.J.C.T."/>
            <person name="Phillips S."/>
            <person name="Plumb R.W."/>
            <person name="Porter K.M."/>
            <person name="Ramsey Y."/>
            <person name="Ranby S.A."/>
            <person name="Rice C.M."/>
            <person name="Ross M.T."/>
            <person name="Searle S.M."/>
            <person name="Sehra H.K."/>
            <person name="Sheridan E."/>
            <person name="Skuce C.D."/>
            <person name="Smith S."/>
            <person name="Smith M."/>
            <person name="Spraggon L."/>
            <person name="Squares S.L."/>
            <person name="Steward C.A."/>
            <person name="Sycamore N."/>
            <person name="Tamlyn-Hall G."/>
            <person name="Tester J."/>
            <person name="Theaker A.J."/>
            <person name="Thomas D.W."/>
            <person name="Thorpe A."/>
            <person name="Tracey A."/>
            <person name="Tromans A."/>
            <person name="Tubby B."/>
            <person name="Wall M."/>
            <person name="Wallis J.M."/>
            <person name="West A.P."/>
            <person name="White S.S."/>
            <person name="Whitehead S.L."/>
            <person name="Whittaker H."/>
            <person name="Wild A."/>
            <person name="Willey D.J."/>
            <person name="Wilmer T.E."/>
            <person name="Wood J.M."/>
            <person name="Wray P.W."/>
            <person name="Wyatt J.C."/>
            <person name="Young L."/>
            <person name="Younger R.M."/>
            <person name="Bentley D.R."/>
            <person name="Coulson A."/>
            <person name="Durbin R.M."/>
            <person name="Hubbard T."/>
            <person name="Sulston J.E."/>
            <person name="Dunham I."/>
            <person name="Rogers J."/>
            <person name="Beck S."/>
        </authorList>
    </citation>
    <scope>NUCLEOTIDE SEQUENCE [LARGE SCALE GENOMIC DNA]</scope>
</reference>
<reference key="5">
    <citation type="journal article" date="2004" name="Genome Res.">
        <title>The status, quality, and expansion of the NIH full-length cDNA project: the Mammalian Gene Collection (MGC).</title>
        <authorList>
            <consortium name="The MGC Project Team"/>
        </authorList>
    </citation>
    <scope>NUCLEOTIDE SEQUENCE [LARGE SCALE MRNA] (ISOFORM 1)</scope>
    <scope>VARIANT PRO-50</scope>
    <source>
        <tissue>Blood</tissue>
        <tissue>Lung</tissue>
    </source>
</reference>
<reference key="6">
    <citation type="journal article" date="2005" name="Biochem. J.">
        <title>Identification, purification and characterization of a novel human blood protein with binding affinity for prostate secretory protein of 94 amino acids.</title>
        <authorList>
            <person name="Reeves J.R."/>
            <person name="Xuan J.W."/>
            <person name="Arfanis K."/>
            <person name="Morin C."/>
            <person name="Garde S.V."/>
            <person name="Ruiz M.T."/>
            <person name="Wisniewski J."/>
            <person name="Panchal C."/>
            <person name="Tanner J.E."/>
        </authorList>
    </citation>
    <scope>PROTEIN SEQUENCE OF 28-57</scope>
    <scope>SUBCELLULAR LOCATION</scope>
    <scope>GLYCOSYLATION</scope>
    <scope>TISSUE SPECIFICITY</scope>
    <scope>INTERACTION WITH MSMB</scope>
</reference>
<reference key="7">
    <citation type="journal article" date="2006" name="Clin. Cancer Res.">
        <title>Prognostic value of prostate secretory protein of 94 amino acids and its binding protein after radical prostatectomy.</title>
        <authorList>
            <person name="Reeves J.R."/>
            <person name="Dulude H."/>
            <person name="Panchal C."/>
            <person name="Daigneault L."/>
            <person name="Ramnani D.M."/>
        </authorList>
    </citation>
    <scope>SUBCELLULAR LOCATION</scope>
    <scope>TISSUE SPECIFICITY</scope>
</reference>
<reference key="8">
    <citation type="journal article" date="2012" name="Mol. Cell. Proteomics">
        <title>Human urinary glycoproteomics; attachment site specific analysis of N- and O-linked glycosylations by CID and ECD.</title>
        <authorList>
            <person name="Halim A."/>
            <person name="Nilsson J."/>
            <person name="Ruetschi U."/>
            <person name="Hesse C."/>
            <person name="Larson G."/>
        </authorList>
    </citation>
    <scope>SUBCELLULAR LOCATION</scope>
    <scope>GLYCOSYLATION</scope>
    <scope>STRUCTURE OF CARBOHYDRATES</scope>
    <scope>IDENTIFICATION BY MASS SPECTROMETRY</scope>
</reference>